<proteinExistence type="evidence at protein level"/>
<name>NOG2_HUMAN</name>
<gene>
    <name type="primary">GNL2</name>
    <name type="synonym">NGP1</name>
</gene>
<comment type="function">
    <text evidence="7 8">GTPase that associates with pre-60S ribosomal subunits in the nucleolus and is required for their nuclear export and maturation (PubMed:32669547). May promote cell proliferation possibly by increasing p53/TP53 protein levels, and consequently those of its downstream product CDKN1A/p21, and decreasing RPL23A protein levels (PubMed:26203195).</text>
</comment>
<comment type="subunit">
    <text evidence="6 7">Interacts with LYAR and RPL23A (PubMed:26203195). Interacts with the nuclear importin-beta receptor and, at a lower extent, with importin-alpha (PubMed:21495629).</text>
</comment>
<comment type="subcellular location">
    <subcellularLocation>
        <location evidence="5 6">Nucleus</location>
        <location evidence="5 6">Nucleolus</location>
    </subcellularLocation>
</comment>
<comment type="tissue specificity">
    <text evidence="9">Widely expressed, with the highest expression level in testis.</text>
</comment>
<comment type="developmental stage">
    <text evidence="6">Up-regulated in actively dividing cells, including in peripheral blood mononuclear cells stimulated with Concanavalin-A. Down-regulated in differentiating cells, including in neural precursor cells induced to differentiate into astrocytes.</text>
</comment>
<comment type="similarity">
    <text evidence="3">Belongs to the TRAFAC class YlqF/YawG GTPase family. NOG2 subfamily.</text>
</comment>
<evidence type="ECO:0000250" key="1">
    <source>
        <dbReference type="UniProtKB" id="Q99LH1"/>
    </source>
</evidence>
<evidence type="ECO:0000255" key="2"/>
<evidence type="ECO:0000255" key="3">
    <source>
        <dbReference type="PROSITE-ProRule" id="PRU01058"/>
    </source>
</evidence>
<evidence type="ECO:0000256" key="4">
    <source>
        <dbReference type="SAM" id="MobiDB-lite"/>
    </source>
</evidence>
<evidence type="ECO:0000269" key="5">
    <source>
    </source>
</evidence>
<evidence type="ECO:0000269" key="6">
    <source>
    </source>
</evidence>
<evidence type="ECO:0000269" key="7">
    <source>
    </source>
</evidence>
<evidence type="ECO:0000269" key="8">
    <source>
    </source>
</evidence>
<evidence type="ECO:0000269" key="9">
    <source>
    </source>
</evidence>
<evidence type="ECO:0000305" key="10"/>
<evidence type="ECO:0007744" key="11">
    <source>
        <dbReference type="PDB" id="6LSS"/>
    </source>
</evidence>
<evidence type="ECO:0007744" key="12">
    <source>
        <dbReference type="PDB" id="6LU8"/>
    </source>
</evidence>
<evidence type="ECO:0007744" key="13">
    <source>
    </source>
</evidence>
<keyword id="KW-0002">3D-structure</keyword>
<keyword id="KW-0007">Acetylation</keyword>
<keyword id="KW-0342">GTP-binding</keyword>
<keyword id="KW-0547">Nucleotide-binding</keyword>
<keyword id="KW-0539">Nucleus</keyword>
<keyword id="KW-0597">Phosphoprotein</keyword>
<keyword id="KW-1267">Proteomics identification</keyword>
<keyword id="KW-1185">Reference proteome</keyword>
<keyword id="KW-0690">Ribosome biogenesis</keyword>
<sequence length="731" mass="83655">MVKPKYKGRSTINPSKASTNPDRVQGAGGQNMRDRATIRRLNMYRQKERRNSRGKIIKPLQYQSTVASGTVARVEPNIKWFGNTRVIKQSSLQKFQEEMDTVMKDPYKVVMKQSKLPMSLLHDRIRPHNLKVHILDTESFETTFGPKSQRKRPNLFASDMQSLIENAEMSTESYDQGKDRDLVTEDTGVRNEAQEEIYKKGQSKRIWGELYKVIDSSDVVVQVLDARDPMGTRSPHIETYLKKEKPWKHLIFVLNKCDLVPTWATKRWVAVLSQDYPTLAFHASLTNPFGKGAFIQLLRQFGKLHTDKKQISVGFIGYPNVGKSSVINTLRSKKVCNVAPIAGETKVWQYITLMRRIFLIDCPGVVYPSEDSETDIVLKGVVQVEKIKSPEDHIGAVLERAKPEYISKTYKIDSWENAEDFLEKLAFRTGKLLKGGEPDLQTVGKMVLNDWQRGRIPFFVKPPNAEPLVAPQLLPSSSLEVVPEAAQNNPGEEVTETAGEGSESIIKEETEENSHCDANTEMQQILTRVRQNFGKINVVPQFSGDDLVPVEVSDLEEELESFSDEEEEEQEQQRDDAEESSSEPEEENVGNDTKAVIKALDEKIAKYQKFLDKAKAKKFSAVRISKGLSEKIFAKPEEQRKTLEEDVDDRAPSKKGKKRKAQREEEQEHSNKAPRALTSKERRRAVRQQRPKKVGVRYYETHNVKNRNRNKKKTNDSEGQKHKRKKFRQKQ</sequence>
<protein>
    <recommendedName>
        <fullName>Nucleolar GTP-binding protein 2</fullName>
    </recommendedName>
    <alternativeName>
        <fullName>Autoantigen NGP-1</fullName>
    </alternativeName>
</protein>
<reference key="1">
    <citation type="journal article" date="1996" name="Cell Growth Differ.">
        <title>Cloning of a novel nucleolar guanosine 5'-triphosphate binding protein autoantigen from a breast tumor.</title>
        <authorList>
            <person name="Racevskis J."/>
            <person name="Dill A."/>
            <person name="Stockert R."/>
            <person name="Fineberg S.A."/>
        </authorList>
    </citation>
    <scope>NUCLEOTIDE SEQUENCE [MRNA]</scope>
    <scope>TISSUE SPECIFICITY</scope>
    <source>
        <tissue>Mammary carcinoma</tissue>
    </source>
</reference>
<reference key="2">
    <citation type="journal article" date="2004" name="Genome Res.">
        <title>The status, quality, and expansion of the NIH full-length cDNA project: the Mammalian Gene Collection (MGC).</title>
        <authorList>
            <consortium name="The MGC Project Team"/>
        </authorList>
    </citation>
    <scope>NUCLEOTIDE SEQUENCE [LARGE SCALE MRNA]</scope>
    <source>
        <tissue>Kidney</tissue>
        <tissue>Muscle</tissue>
    </source>
</reference>
<reference key="3">
    <citation type="journal article" date="2002" name="Mol. Biol. Cell">
        <title>Functional proteomic analysis of human nucleolus.</title>
        <authorList>
            <person name="Scherl A."/>
            <person name="Coute Y."/>
            <person name="Deon C."/>
            <person name="Calle A."/>
            <person name="Kindbeiter K."/>
            <person name="Sanchez J.-C."/>
            <person name="Greco A."/>
            <person name="Hochstrasser D.F."/>
            <person name="Diaz J.-J."/>
        </authorList>
    </citation>
    <scope>SUBCELLULAR LOCATION [LARGE SCALE ANALYSIS]</scope>
    <source>
        <tissue>Cervix carcinoma</tissue>
    </source>
</reference>
<reference key="4">
    <citation type="journal article" date="2006" name="Cell">
        <title>Global, in vivo, and site-specific phosphorylation dynamics in signaling networks.</title>
        <authorList>
            <person name="Olsen J.V."/>
            <person name="Blagoev B."/>
            <person name="Gnad F."/>
            <person name="Macek B."/>
            <person name="Kumar C."/>
            <person name="Mortensen P."/>
            <person name="Mann M."/>
        </authorList>
    </citation>
    <scope>IDENTIFICATION BY MASS SPECTROMETRY [LARGE SCALE ANALYSIS]</scope>
    <source>
        <tissue>Cervix carcinoma</tissue>
    </source>
</reference>
<reference key="5">
    <citation type="journal article" date="2011" name="BMC Syst. Biol.">
        <title>Initial characterization of the human central proteome.</title>
        <authorList>
            <person name="Burkard T.R."/>
            <person name="Planyavsky M."/>
            <person name="Kaupe I."/>
            <person name="Breitwieser F.P."/>
            <person name="Buerckstuemmer T."/>
            <person name="Bennett K.L."/>
            <person name="Superti-Furga G."/>
            <person name="Colinge J."/>
        </authorList>
    </citation>
    <scope>IDENTIFICATION BY MASS SPECTROMETRY [LARGE SCALE ANALYSIS]</scope>
</reference>
<reference key="6">
    <citation type="journal article" date="2011" name="Biochemistry">
        <title>Signals and pathways regulating nucleolar retention of novel putative nucleolar GTPase NGP-1(GNL-2).</title>
        <authorList>
            <person name="Chennupati V."/>
            <person name="Datta D."/>
            <person name="Rao M.R."/>
            <person name="Boddapati N."/>
            <person name="Kayasani M."/>
            <person name="Sankaranarayanan R."/>
            <person name="Mishra M."/>
            <person name="Seth P."/>
            <person name="Mani C."/>
            <person name="Mahalingam S."/>
        </authorList>
    </citation>
    <scope>INTERACTION WITH IMPORTIN-ALPHA AND IMPORTIN-BETA</scope>
    <scope>SUBCELLULAR LOCATION</scope>
    <scope>DEVELOPMENTAL STAGE</scope>
    <scope>MUTAGENESIS OF 33-ARG--ARG-35; 39-ARG-ARG-40; 49-ARG-ARG-50; 227-ARG--PRO-229; ASP-258; LYS-323; SER-324; SER-325; 343-GLY--THR-345; 363-PRO-GLY-364; PRO-463; PRO-475; 682-ARG--ARG-684; 711-LYS--LYS-713 AND 724-ARG--LYS-726</scope>
</reference>
<reference key="7">
    <citation type="journal article" date="2012" name="Proc. Natl. Acad. Sci. U.S.A.">
        <title>N-terminal acetylome analyses and functional insights of the N-terminal acetyltransferase NatB.</title>
        <authorList>
            <person name="Van Damme P."/>
            <person name="Lasa M."/>
            <person name="Polevoda B."/>
            <person name="Gazquez C."/>
            <person name="Elosegui-Artola A."/>
            <person name="Kim D.S."/>
            <person name="De Juan-Pardo E."/>
            <person name="Demeyer K."/>
            <person name="Hole K."/>
            <person name="Larrea E."/>
            <person name="Timmerman E."/>
            <person name="Prieto J."/>
            <person name="Arnesen T."/>
            <person name="Sherman F."/>
            <person name="Gevaert K."/>
            <person name="Aldabe R."/>
        </authorList>
    </citation>
    <scope>ACETYLATION [LARGE SCALE ANALYSIS] AT MET-1</scope>
    <scope>IDENTIFICATION BY MASS SPECTROMETRY [LARGE SCALE ANALYSIS]</scope>
</reference>
<reference key="8">
    <citation type="journal article" date="2015" name="J. Biol. Chem.">
        <title>Nucleolar GTP-binding protein-1 (NGP-1) promotes G1 to S phase transition by activating cyclin-dependent kinase inhibitor p21 Cip1/Waf1.</title>
        <authorList>
            <person name="Datta D."/>
            <person name="Anbarasu K."/>
            <person name="Rajabather S."/>
            <person name="Priya R.S."/>
            <person name="Desai P."/>
            <person name="Mahalingam S."/>
        </authorList>
    </citation>
    <scope>FUNCTION</scope>
    <scope>INTERACTION WITH LYAR AND RPL23A</scope>
</reference>
<reference evidence="11 12" key="9">
    <citation type="journal article" date="2020" name="Nat. Commun.">
        <title>Structural snapshots of human pre-60S ribosomal particles before and after nuclear export.</title>
        <authorList>
            <person name="Liang X."/>
            <person name="Zuo M.Q."/>
            <person name="Zhang Y."/>
            <person name="Li N."/>
            <person name="Ma C."/>
            <person name="Dong M.Q."/>
            <person name="Gao N."/>
        </authorList>
    </citation>
    <scope>STRUCTURE BY ELECTRON MICROSCOPY (3.09 ANGSTROMS) IN COMPLEX WITH THE 60S RIBOSOME</scope>
    <scope>FUNCTION</scope>
</reference>
<accession>Q13823</accession>
<accession>Q9BWN7</accession>
<dbReference type="EMBL" id="L05425">
    <property type="protein sequence ID" value="AAC37588.1"/>
    <property type="molecule type" value="mRNA"/>
</dbReference>
<dbReference type="EMBL" id="BC000107">
    <property type="protein sequence ID" value="AAH00107.1"/>
    <property type="molecule type" value="mRNA"/>
</dbReference>
<dbReference type="EMBL" id="BC009250">
    <property type="protein sequence ID" value="AAH09250.1"/>
    <property type="molecule type" value="mRNA"/>
</dbReference>
<dbReference type="CCDS" id="CCDS421.1"/>
<dbReference type="RefSeq" id="NP_037417.1">
    <property type="nucleotide sequence ID" value="NM_013285.3"/>
</dbReference>
<dbReference type="PDB" id="6LSS">
    <property type="method" value="EM"/>
    <property type="resolution" value="3.23 A"/>
    <property type="chains" value="1=1-731"/>
</dbReference>
<dbReference type="PDB" id="6LU8">
    <property type="method" value="EM"/>
    <property type="resolution" value="3.13 A"/>
    <property type="chains" value="1=1-731"/>
</dbReference>
<dbReference type="PDB" id="8FKZ">
    <property type="method" value="EM"/>
    <property type="resolution" value="3.04 A"/>
    <property type="chains" value="NC=1-731"/>
</dbReference>
<dbReference type="PDB" id="8FL0">
    <property type="method" value="EM"/>
    <property type="resolution" value="2.91 A"/>
    <property type="chains" value="NC=1-731"/>
</dbReference>
<dbReference type="PDB" id="8FL2">
    <property type="method" value="EM"/>
    <property type="resolution" value="2.67 A"/>
    <property type="chains" value="NC=1-731"/>
</dbReference>
<dbReference type="PDB" id="8FL3">
    <property type="method" value="EM"/>
    <property type="resolution" value="2.53 A"/>
    <property type="chains" value="NC=1-731"/>
</dbReference>
<dbReference type="PDB" id="8FL4">
    <property type="method" value="EM"/>
    <property type="resolution" value="2.89 A"/>
    <property type="chains" value="NC=1-731"/>
</dbReference>
<dbReference type="PDB" id="8FL6">
    <property type="method" value="EM"/>
    <property type="resolution" value="2.62 A"/>
    <property type="chains" value="NC=1-731"/>
</dbReference>
<dbReference type="PDB" id="8FL7">
    <property type="method" value="EM"/>
    <property type="resolution" value="2.55 A"/>
    <property type="chains" value="NC=1-731"/>
</dbReference>
<dbReference type="PDB" id="8FL9">
    <property type="method" value="EM"/>
    <property type="resolution" value="2.75 A"/>
    <property type="chains" value="NC=1-731"/>
</dbReference>
<dbReference type="PDB" id="8IDT">
    <property type="method" value="EM"/>
    <property type="resolution" value="2.80 A"/>
    <property type="chains" value="A=1-731"/>
</dbReference>
<dbReference type="PDB" id="8IDY">
    <property type="method" value="EM"/>
    <property type="resolution" value="3.00 A"/>
    <property type="chains" value="A=1-731"/>
</dbReference>
<dbReference type="PDB" id="8IE3">
    <property type="method" value="EM"/>
    <property type="resolution" value="3.30 A"/>
    <property type="chains" value="A=1-731"/>
</dbReference>
<dbReference type="PDB" id="8INE">
    <property type="method" value="EM"/>
    <property type="resolution" value="3.20 A"/>
    <property type="chains" value="A=1-731"/>
</dbReference>
<dbReference type="PDB" id="8INF">
    <property type="method" value="EM"/>
    <property type="resolution" value="3.00 A"/>
    <property type="chains" value="A=1-731"/>
</dbReference>
<dbReference type="PDB" id="8INK">
    <property type="method" value="EM"/>
    <property type="resolution" value="3.20 A"/>
    <property type="chains" value="w=1-731"/>
</dbReference>
<dbReference type="PDB" id="8IPD">
    <property type="method" value="EM"/>
    <property type="resolution" value="3.20 A"/>
    <property type="chains" value="w=1-731"/>
</dbReference>
<dbReference type="PDB" id="8IPX">
    <property type="method" value="EM"/>
    <property type="resolution" value="4.30 A"/>
    <property type="chains" value="w=1-731"/>
</dbReference>
<dbReference type="PDB" id="8IPY">
    <property type="method" value="EM"/>
    <property type="resolution" value="3.20 A"/>
    <property type="chains" value="w=1-731"/>
</dbReference>
<dbReference type="PDB" id="8IR1">
    <property type="method" value="EM"/>
    <property type="resolution" value="3.30 A"/>
    <property type="chains" value="w=1-731"/>
</dbReference>
<dbReference type="PDB" id="8IR3">
    <property type="method" value="EM"/>
    <property type="resolution" value="3.50 A"/>
    <property type="chains" value="w=1-731"/>
</dbReference>
<dbReference type="PDB" id="8RL2">
    <property type="method" value="EM"/>
    <property type="resolution" value="2.84 A"/>
    <property type="chains" value="CB=1-731"/>
</dbReference>
<dbReference type="PDBsum" id="6LSS"/>
<dbReference type="PDBsum" id="6LU8"/>
<dbReference type="PDBsum" id="8FKZ"/>
<dbReference type="PDBsum" id="8FL0"/>
<dbReference type="PDBsum" id="8FL2"/>
<dbReference type="PDBsum" id="8FL3"/>
<dbReference type="PDBsum" id="8FL4"/>
<dbReference type="PDBsum" id="8FL6"/>
<dbReference type="PDBsum" id="8FL7"/>
<dbReference type="PDBsum" id="8FL9"/>
<dbReference type="PDBsum" id="8IDT"/>
<dbReference type="PDBsum" id="8IDY"/>
<dbReference type="PDBsum" id="8IE3"/>
<dbReference type="PDBsum" id="8INE"/>
<dbReference type="PDBsum" id="8INF"/>
<dbReference type="PDBsum" id="8INK"/>
<dbReference type="PDBsum" id="8IPD"/>
<dbReference type="PDBsum" id="8IPX"/>
<dbReference type="PDBsum" id="8IPY"/>
<dbReference type="PDBsum" id="8IR1"/>
<dbReference type="PDBsum" id="8IR3"/>
<dbReference type="PDBsum" id="8RL2"/>
<dbReference type="EMDB" id="EMD-0964"/>
<dbReference type="EMDB" id="EMD-0978"/>
<dbReference type="EMDB" id="EMD-19330"/>
<dbReference type="EMDB" id="EMD-29262"/>
<dbReference type="EMDB" id="EMD-29263"/>
<dbReference type="EMDB" id="EMD-29265"/>
<dbReference type="EMDB" id="EMD-29266"/>
<dbReference type="EMDB" id="EMD-29267"/>
<dbReference type="EMDB" id="EMD-29268"/>
<dbReference type="EMDB" id="EMD-29269"/>
<dbReference type="EMDB" id="EMD-29271"/>
<dbReference type="EMDB" id="EMD-35370"/>
<dbReference type="EMDB" id="EMD-35371"/>
<dbReference type="EMDB" id="EMD-35375"/>
<dbReference type="EMDB" id="EMD-35596"/>
<dbReference type="EMDB" id="EMD-35597"/>
<dbReference type="EMDB" id="EMD-35599"/>
<dbReference type="EMDB" id="EMD-35639"/>
<dbReference type="EMDB" id="EMD-35649"/>
<dbReference type="EMDB" id="EMD-35651"/>
<dbReference type="EMDB" id="EMD-35672"/>
<dbReference type="EMDB" id="EMD-35673"/>
<dbReference type="SMR" id="Q13823"/>
<dbReference type="BioGRID" id="118942">
    <property type="interactions" value="389"/>
</dbReference>
<dbReference type="FunCoup" id="Q13823">
    <property type="interactions" value="2797"/>
</dbReference>
<dbReference type="IntAct" id="Q13823">
    <property type="interactions" value="254"/>
</dbReference>
<dbReference type="MINT" id="Q13823"/>
<dbReference type="STRING" id="9606.ENSP00000362153"/>
<dbReference type="GlyGen" id="Q13823">
    <property type="glycosylation" value="2 sites, 1 O-linked glycan (2 sites)"/>
</dbReference>
<dbReference type="iPTMnet" id="Q13823"/>
<dbReference type="MetOSite" id="Q13823"/>
<dbReference type="PhosphoSitePlus" id="Q13823"/>
<dbReference type="SwissPalm" id="Q13823"/>
<dbReference type="BioMuta" id="GNL2"/>
<dbReference type="jPOST" id="Q13823"/>
<dbReference type="MassIVE" id="Q13823"/>
<dbReference type="PaxDb" id="9606-ENSP00000362153"/>
<dbReference type="PeptideAtlas" id="Q13823"/>
<dbReference type="ProteomicsDB" id="59695"/>
<dbReference type="Pumba" id="Q13823"/>
<dbReference type="Antibodypedia" id="31740">
    <property type="antibodies" value="172 antibodies from 29 providers"/>
</dbReference>
<dbReference type="DNASU" id="29889"/>
<dbReference type="Ensembl" id="ENST00000373062.8">
    <property type="protein sequence ID" value="ENSP00000362153.3"/>
    <property type="gene ID" value="ENSG00000134697.13"/>
</dbReference>
<dbReference type="GeneID" id="29889"/>
<dbReference type="KEGG" id="hsa:29889"/>
<dbReference type="MANE-Select" id="ENST00000373062.8">
    <property type="protein sequence ID" value="ENSP00000362153.3"/>
    <property type="RefSeq nucleotide sequence ID" value="NM_013285.3"/>
    <property type="RefSeq protein sequence ID" value="NP_037417.1"/>
</dbReference>
<dbReference type="AGR" id="HGNC:29925"/>
<dbReference type="CTD" id="29889"/>
<dbReference type="DisGeNET" id="29889"/>
<dbReference type="GeneCards" id="GNL2"/>
<dbReference type="HGNC" id="HGNC:29925">
    <property type="gene designation" value="GNL2"/>
</dbReference>
<dbReference type="HPA" id="ENSG00000134697">
    <property type="expression patterns" value="Low tissue specificity"/>
</dbReference>
<dbReference type="MIM" id="609365">
    <property type="type" value="gene"/>
</dbReference>
<dbReference type="neXtProt" id="NX_Q13823"/>
<dbReference type="OpenTargets" id="ENSG00000134697"/>
<dbReference type="PharmGKB" id="PA134944852"/>
<dbReference type="VEuPathDB" id="HostDB:ENSG00000134697"/>
<dbReference type="eggNOG" id="KOG2423">
    <property type="taxonomic scope" value="Eukaryota"/>
</dbReference>
<dbReference type="GeneTree" id="ENSGT00810000125524"/>
<dbReference type="HOGENOM" id="CLU_011106_4_1_1"/>
<dbReference type="InParanoid" id="Q13823"/>
<dbReference type="OMA" id="KNPEDHI"/>
<dbReference type="OrthoDB" id="444945at2759"/>
<dbReference type="PAN-GO" id="Q13823">
    <property type="GO annotations" value="1 GO annotation based on evolutionary models"/>
</dbReference>
<dbReference type="PhylomeDB" id="Q13823"/>
<dbReference type="TreeFam" id="TF105668"/>
<dbReference type="PathwayCommons" id="Q13823"/>
<dbReference type="SignaLink" id="Q13823"/>
<dbReference type="BioGRID-ORCS" id="29889">
    <property type="hits" value="762 hits in 1163 CRISPR screens"/>
</dbReference>
<dbReference type="CD-CODE" id="71F78BB1">
    <property type="entry name" value="Synthetic Condensate 000049"/>
</dbReference>
<dbReference type="CD-CODE" id="91857CE7">
    <property type="entry name" value="Nucleolus"/>
</dbReference>
<dbReference type="ChiTaRS" id="GNL2">
    <property type="organism name" value="human"/>
</dbReference>
<dbReference type="GeneWiki" id="GNL2"/>
<dbReference type="GenomeRNAi" id="29889"/>
<dbReference type="Pharos" id="Q13823">
    <property type="development level" value="Tbio"/>
</dbReference>
<dbReference type="PRO" id="PR:Q13823"/>
<dbReference type="Proteomes" id="UP000005640">
    <property type="component" value="Chromosome 1"/>
</dbReference>
<dbReference type="RNAct" id="Q13823">
    <property type="molecule type" value="protein"/>
</dbReference>
<dbReference type="Bgee" id="ENSG00000134697">
    <property type="expression patterns" value="Expressed in tendon of biceps brachii and 204 other cell types or tissues"/>
</dbReference>
<dbReference type="ExpressionAtlas" id="Q13823">
    <property type="expression patterns" value="baseline and differential"/>
</dbReference>
<dbReference type="GO" id="GO:0016020">
    <property type="term" value="C:membrane"/>
    <property type="evidence" value="ECO:0007005"/>
    <property type="project" value="UniProtKB"/>
</dbReference>
<dbReference type="GO" id="GO:0005730">
    <property type="term" value="C:nucleolus"/>
    <property type="evidence" value="ECO:0000314"/>
    <property type="project" value="HPA"/>
</dbReference>
<dbReference type="GO" id="GO:0005634">
    <property type="term" value="C:nucleus"/>
    <property type="evidence" value="ECO:0000304"/>
    <property type="project" value="UniProtKB"/>
</dbReference>
<dbReference type="GO" id="GO:0005525">
    <property type="term" value="F:GTP binding"/>
    <property type="evidence" value="ECO:0000303"/>
    <property type="project" value="UniProtKB"/>
</dbReference>
<dbReference type="GO" id="GO:0003924">
    <property type="term" value="F:GTPase activity"/>
    <property type="evidence" value="ECO:0000303"/>
    <property type="project" value="UniProtKB"/>
</dbReference>
<dbReference type="GO" id="GO:0003723">
    <property type="term" value="F:RNA binding"/>
    <property type="evidence" value="ECO:0007005"/>
    <property type="project" value="UniProtKB"/>
</dbReference>
<dbReference type="GO" id="GO:0042254">
    <property type="term" value="P:ribosome biogenesis"/>
    <property type="evidence" value="ECO:0007669"/>
    <property type="project" value="UniProtKB-KW"/>
</dbReference>
<dbReference type="CDD" id="cd01858">
    <property type="entry name" value="NGP_1"/>
    <property type="match status" value="1"/>
</dbReference>
<dbReference type="FunFam" id="3.40.50.300:FF:000559">
    <property type="entry name" value="Nuclear/nucleolar GTPase 2"/>
    <property type="match status" value="1"/>
</dbReference>
<dbReference type="FunFam" id="1.10.1580.10:FF:000001">
    <property type="entry name" value="Nucleolar GTP-binding protein 2"/>
    <property type="match status" value="1"/>
</dbReference>
<dbReference type="Gene3D" id="1.10.1580.10">
    <property type="match status" value="1"/>
</dbReference>
<dbReference type="Gene3D" id="3.40.50.300">
    <property type="entry name" value="P-loop containing nucleotide triphosphate hydrolases"/>
    <property type="match status" value="1"/>
</dbReference>
<dbReference type="InterPro" id="IPR030378">
    <property type="entry name" value="G_CP_dom"/>
</dbReference>
<dbReference type="InterPro" id="IPR024929">
    <property type="entry name" value="GNL2_CP_dom"/>
</dbReference>
<dbReference type="InterPro" id="IPR006073">
    <property type="entry name" value="GTP-bd"/>
</dbReference>
<dbReference type="InterPro" id="IPR023179">
    <property type="entry name" value="GTP-bd_ortho_bundle_sf"/>
</dbReference>
<dbReference type="InterPro" id="IPR012971">
    <property type="entry name" value="NOG2_N_dom"/>
</dbReference>
<dbReference type="InterPro" id="IPR027417">
    <property type="entry name" value="P-loop_NTPase"/>
</dbReference>
<dbReference type="InterPro" id="IPR050755">
    <property type="entry name" value="TRAFAC_YlqF/YawG_RiboMat"/>
</dbReference>
<dbReference type="PANTHER" id="PTHR11089">
    <property type="entry name" value="GTP-BINDING PROTEIN-RELATED"/>
    <property type="match status" value="1"/>
</dbReference>
<dbReference type="PANTHER" id="PTHR11089:SF9">
    <property type="entry name" value="NUCLEOLAR GTP-BINDING PROTEIN 2"/>
    <property type="match status" value="1"/>
</dbReference>
<dbReference type="Pfam" id="PF01926">
    <property type="entry name" value="MMR_HSR1"/>
    <property type="match status" value="1"/>
</dbReference>
<dbReference type="Pfam" id="PF08153">
    <property type="entry name" value="NGP1NT"/>
    <property type="match status" value="1"/>
</dbReference>
<dbReference type="PRINTS" id="PR00326">
    <property type="entry name" value="GTP1OBG"/>
</dbReference>
<dbReference type="SUPFAM" id="SSF52540">
    <property type="entry name" value="P-loop containing nucleoside triphosphate hydrolases"/>
    <property type="match status" value="1"/>
</dbReference>
<dbReference type="PROSITE" id="PS51721">
    <property type="entry name" value="G_CP"/>
    <property type="match status" value="1"/>
</dbReference>
<organism>
    <name type="scientific">Homo sapiens</name>
    <name type="common">Human</name>
    <dbReference type="NCBI Taxonomy" id="9606"/>
    <lineage>
        <taxon>Eukaryota</taxon>
        <taxon>Metazoa</taxon>
        <taxon>Chordata</taxon>
        <taxon>Craniata</taxon>
        <taxon>Vertebrata</taxon>
        <taxon>Euteleostomi</taxon>
        <taxon>Mammalia</taxon>
        <taxon>Eutheria</taxon>
        <taxon>Euarchontoglires</taxon>
        <taxon>Primates</taxon>
        <taxon>Haplorrhini</taxon>
        <taxon>Catarrhini</taxon>
        <taxon>Hominidae</taxon>
        <taxon>Homo</taxon>
    </lineage>
</organism>
<feature type="chain" id="PRO_0000215806" description="Nucleolar GTP-binding protein 2">
    <location>
        <begin position="1"/>
        <end position="731"/>
    </location>
</feature>
<feature type="domain" description="CP-type G" evidence="3">
    <location>
        <begin position="207"/>
        <end position="368"/>
    </location>
</feature>
<feature type="region of interest" description="Disordered" evidence="4">
    <location>
        <begin position="1"/>
        <end position="33"/>
    </location>
</feature>
<feature type="region of interest" description="Disordered" evidence="4">
    <location>
        <begin position="481"/>
        <end position="502"/>
    </location>
</feature>
<feature type="region of interest" description="Disordered" evidence="4">
    <location>
        <begin position="555"/>
        <end position="594"/>
    </location>
</feature>
<feature type="region of interest" description="Disordered" evidence="4">
    <location>
        <begin position="630"/>
        <end position="731"/>
    </location>
</feature>
<feature type="compositionally biased region" description="Polar residues" evidence="4">
    <location>
        <begin position="10"/>
        <end position="22"/>
    </location>
</feature>
<feature type="compositionally biased region" description="Acidic residues" evidence="4">
    <location>
        <begin position="555"/>
        <end position="589"/>
    </location>
</feature>
<feature type="compositionally biased region" description="Basic and acidic residues" evidence="4">
    <location>
        <begin position="630"/>
        <end position="652"/>
    </location>
</feature>
<feature type="compositionally biased region" description="Basic and acidic residues" evidence="4">
    <location>
        <begin position="662"/>
        <end position="671"/>
    </location>
</feature>
<feature type="compositionally biased region" description="Basic residues" evidence="4">
    <location>
        <begin position="681"/>
        <end position="695"/>
    </location>
</feature>
<feature type="compositionally biased region" description="Basic residues" evidence="4">
    <location>
        <begin position="721"/>
        <end position="731"/>
    </location>
</feature>
<feature type="binding site" evidence="2">
    <location>
        <begin position="317"/>
        <end position="324"/>
    </location>
    <ligand>
        <name>GTP</name>
        <dbReference type="ChEBI" id="CHEBI:37565"/>
    </ligand>
</feature>
<feature type="binding site" evidence="2">
    <location>
        <begin position="361"/>
        <end position="365"/>
    </location>
    <ligand>
        <name>GTP</name>
        <dbReference type="ChEBI" id="CHEBI:37565"/>
    </ligand>
</feature>
<feature type="modified residue" description="N-acetylmethionine" evidence="13">
    <location>
        <position position="1"/>
    </location>
</feature>
<feature type="modified residue" description="Phosphoserine" evidence="1">
    <location>
        <position position="504"/>
    </location>
</feature>
<feature type="sequence variant" id="VAR_050291" description="In dbSNP:rs12025870.">
    <original>Q</original>
    <variation>H</variation>
    <location>
        <position position="452"/>
    </location>
</feature>
<feature type="mutagenesis site" description="Diffused nuclear localization, loss of nucleolar localization." evidence="6">
    <original>RDR</original>
    <variation>ADA</variation>
    <location>
        <begin position="33"/>
        <end position="35"/>
    </location>
</feature>
<feature type="mutagenesis site" description="Diffused nuclear localization, loss of nucleolar localization." evidence="6">
    <original>RR</original>
    <variation>AA</variation>
    <location>
        <begin position="39"/>
        <end position="40"/>
    </location>
</feature>
<feature type="mutagenesis site" description="No effect on nucleolar localization." evidence="6">
    <original>RR</original>
    <variation>AA</variation>
    <location>
        <begin position="39"/>
        <end position="40"/>
    </location>
</feature>
<feature type="mutagenesis site" description="Diffused nuclear localization, loss of nucleolar localization." evidence="6">
    <original>RR</original>
    <variation>AA</variation>
    <location>
        <begin position="49"/>
        <end position="50"/>
    </location>
</feature>
<feature type="mutagenesis site" description="Loss of GTP-binding. Efficient localization to the nucleus, but excluded from nucleoli." evidence="6">
    <original>RDP</original>
    <variation>AAA</variation>
    <location>
        <begin position="227"/>
        <end position="229"/>
    </location>
</feature>
<feature type="mutagenesis site" description="Loss of GTP-binding. Punctate pattern throughout the nucleus, including nucleoli." evidence="6">
    <original>D</original>
    <variation>A</variation>
    <location>
        <position position="258"/>
    </location>
</feature>
<feature type="mutagenesis site" description="No effect on GTP-binding, nor on nucleolar localization." evidence="6">
    <original>K</original>
    <variation>A</variation>
    <location>
        <position position="323"/>
    </location>
</feature>
<feature type="mutagenesis site" description="No effect on GTP-binding, nor on nucleolar localization." evidence="6">
    <original>S</original>
    <variation>A</variation>
    <location>
        <position position="324"/>
    </location>
</feature>
<feature type="mutagenesis site" description="No effect on GTP-binding, nor on nucleolar localization." evidence="6">
    <original>S</original>
    <variation>A</variation>
    <location>
        <position position="325"/>
    </location>
</feature>
<feature type="mutagenesis site" description="No effect on GTP-binding, nor on nucleolar localization." evidence="6">
    <original>GET</original>
    <variation>AEA</variation>
    <location>
        <begin position="343"/>
        <end position="345"/>
    </location>
</feature>
<feature type="mutagenesis site" description="No effect on GTP-binding, nor on nucleolar localization." evidence="6">
    <original>PG</original>
    <variation>AA</variation>
    <location>
        <begin position="363"/>
        <end position="364"/>
    </location>
</feature>
<feature type="mutagenesis site" description="No effect on nucleolar localization; when associated with A-475." evidence="6">
    <original>P</original>
    <variation>A</variation>
    <location>
        <position position="463"/>
    </location>
</feature>
<feature type="mutagenesis site" description="No effect on nucleolar localization; when associated with A-463." evidence="6">
    <original>P</original>
    <variation>A</variation>
    <location>
        <position position="475"/>
    </location>
</feature>
<feature type="mutagenesis site" description="No effect on nucleolar localization. Predominantly cytoplasmic, with some nucleolar staining; when associated with 711-AAA-713. Diffused localization to both cytoplasm and nucleus; when associated with 711-AAA-713 and 724-AAA-726." evidence="6">
    <original>RRR</original>
    <variation>AAA</variation>
    <location>
        <begin position="682"/>
        <end position="684"/>
    </location>
</feature>
<feature type="mutagenesis site" description="No effect on nucleolar localization Predominantly cytoplasmic, with some nucleolar staining; when associated with 682-AAA-684. Strong nucleolar localization, with some cytoplasmic staining; when associated with 724-AAA-726. Diffused localization to both cytoplasm and nucleus; when associated with 682-AAA-684 and 724-AAA-726." evidence="6">
    <original>KKK</original>
    <variation>AAA</variation>
    <location>
        <begin position="711"/>
        <end position="713"/>
    </location>
</feature>
<feature type="mutagenesis site" description="No effect on nucleolar localization. Strong nucleolar localization, with some cytoplasmic staining; when associated with 711-AAA-713. Diffused localization to both cytoplasm and nucleus; when associated with 682-AAA-684 and 711-AAA-713." evidence="6">
    <original>RKK</original>
    <variation>AAA</variation>
    <location>
        <begin position="724"/>
        <end position="726"/>
    </location>
</feature>
<feature type="sequence conflict" description="In Ref. 2; AAH00107." evidence="10" ref="2">
    <original>S</original>
    <variation>I</variation>
    <location>
        <position position="284"/>
    </location>
</feature>